<protein>
    <recommendedName>
        <fullName evidence="1">Small ribosomal subunit protein uS10</fullName>
    </recommendedName>
    <alternativeName>
        <fullName evidence="2">30S ribosomal protein S10</fullName>
    </alternativeName>
</protein>
<comment type="function">
    <text evidence="1">Involved in the binding of tRNA to the ribosomes.</text>
</comment>
<comment type="subunit">
    <text evidence="1">Part of the 30S ribosomal subunit.</text>
</comment>
<comment type="similarity">
    <text evidence="1">Belongs to the universal ribosomal protein uS10 family.</text>
</comment>
<name>RS10_CALS4</name>
<accession>Q8R7V3</accession>
<feature type="chain" id="PRO_0000146622" description="Small ribosomal subunit protein uS10">
    <location>
        <begin position="1"/>
        <end position="102"/>
    </location>
</feature>
<keyword id="KW-1185">Reference proteome</keyword>
<keyword id="KW-0687">Ribonucleoprotein</keyword>
<keyword id="KW-0689">Ribosomal protein</keyword>
<reference key="1">
    <citation type="journal article" date="2002" name="Genome Res.">
        <title>A complete sequence of the T. tengcongensis genome.</title>
        <authorList>
            <person name="Bao Q."/>
            <person name="Tian Y."/>
            <person name="Li W."/>
            <person name="Xu Z."/>
            <person name="Xuan Z."/>
            <person name="Hu S."/>
            <person name="Dong W."/>
            <person name="Yang J."/>
            <person name="Chen Y."/>
            <person name="Xue Y."/>
            <person name="Xu Y."/>
            <person name="Lai X."/>
            <person name="Huang L."/>
            <person name="Dong X."/>
            <person name="Ma Y."/>
            <person name="Ling L."/>
            <person name="Tan H."/>
            <person name="Chen R."/>
            <person name="Wang J."/>
            <person name="Yu J."/>
            <person name="Yang H."/>
        </authorList>
    </citation>
    <scope>NUCLEOTIDE SEQUENCE [LARGE SCALE GENOMIC DNA]</scope>
    <source>
        <strain>DSM 15242 / JCM 11007 / NBRC 100824 / MB4</strain>
    </source>
</reference>
<sequence length="102" mass="11603">MPKQKIRIRLKAFDHAILDQSAQKIVETAKRTGAEVSGPIPLPTKREVITILRAPHKYKDSREQFEIKTHKRLIDILNPTPKTVDALMKLDLPSGVDIEIKL</sequence>
<dbReference type="EMBL" id="AE008691">
    <property type="protein sequence ID" value="AAM25436.1"/>
    <property type="molecule type" value="Genomic_DNA"/>
</dbReference>
<dbReference type="RefSeq" id="WP_011026339.1">
    <property type="nucleotide sequence ID" value="NZ_JANUCV010000001.1"/>
</dbReference>
<dbReference type="SMR" id="Q8R7V3"/>
<dbReference type="STRING" id="273068.TTE2294"/>
<dbReference type="KEGG" id="tte:TTE2294"/>
<dbReference type="eggNOG" id="COG0051">
    <property type="taxonomic scope" value="Bacteria"/>
</dbReference>
<dbReference type="HOGENOM" id="CLU_122625_1_3_9"/>
<dbReference type="OrthoDB" id="9804464at2"/>
<dbReference type="Proteomes" id="UP000000555">
    <property type="component" value="Chromosome"/>
</dbReference>
<dbReference type="GO" id="GO:1990904">
    <property type="term" value="C:ribonucleoprotein complex"/>
    <property type="evidence" value="ECO:0007669"/>
    <property type="project" value="UniProtKB-KW"/>
</dbReference>
<dbReference type="GO" id="GO:0005840">
    <property type="term" value="C:ribosome"/>
    <property type="evidence" value="ECO:0007669"/>
    <property type="project" value="UniProtKB-KW"/>
</dbReference>
<dbReference type="GO" id="GO:0003735">
    <property type="term" value="F:structural constituent of ribosome"/>
    <property type="evidence" value="ECO:0007669"/>
    <property type="project" value="InterPro"/>
</dbReference>
<dbReference type="GO" id="GO:0000049">
    <property type="term" value="F:tRNA binding"/>
    <property type="evidence" value="ECO:0007669"/>
    <property type="project" value="UniProtKB-UniRule"/>
</dbReference>
<dbReference type="GO" id="GO:0006412">
    <property type="term" value="P:translation"/>
    <property type="evidence" value="ECO:0007669"/>
    <property type="project" value="UniProtKB-UniRule"/>
</dbReference>
<dbReference type="FunFam" id="3.30.70.600:FF:000001">
    <property type="entry name" value="30S ribosomal protein S10"/>
    <property type="match status" value="1"/>
</dbReference>
<dbReference type="Gene3D" id="3.30.70.600">
    <property type="entry name" value="Ribosomal protein S10 domain"/>
    <property type="match status" value="1"/>
</dbReference>
<dbReference type="HAMAP" id="MF_00508">
    <property type="entry name" value="Ribosomal_uS10"/>
    <property type="match status" value="1"/>
</dbReference>
<dbReference type="InterPro" id="IPR001848">
    <property type="entry name" value="Ribosomal_uS10"/>
</dbReference>
<dbReference type="InterPro" id="IPR018268">
    <property type="entry name" value="Ribosomal_uS10_CS"/>
</dbReference>
<dbReference type="InterPro" id="IPR027486">
    <property type="entry name" value="Ribosomal_uS10_dom"/>
</dbReference>
<dbReference type="InterPro" id="IPR036838">
    <property type="entry name" value="Ribosomal_uS10_dom_sf"/>
</dbReference>
<dbReference type="NCBIfam" id="NF001861">
    <property type="entry name" value="PRK00596.1"/>
    <property type="match status" value="1"/>
</dbReference>
<dbReference type="NCBIfam" id="TIGR01049">
    <property type="entry name" value="rpsJ_bact"/>
    <property type="match status" value="1"/>
</dbReference>
<dbReference type="PANTHER" id="PTHR11700">
    <property type="entry name" value="30S RIBOSOMAL PROTEIN S10 FAMILY MEMBER"/>
    <property type="match status" value="1"/>
</dbReference>
<dbReference type="Pfam" id="PF00338">
    <property type="entry name" value="Ribosomal_S10"/>
    <property type="match status" value="1"/>
</dbReference>
<dbReference type="PRINTS" id="PR00971">
    <property type="entry name" value="RIBOSOMALS10"/>
</dbReference>
<dbReference type="SMART" id="SM01403">
    <property type="entry name" value="Ribosomal_S10"/>
    <property type="match status" value="1"/>
</dbReference>
<dbReference type="SUPFAM" id="SSF54999">
    <property type="entry name" value="Ribosomal protein S10"/>
    <property type="match status" value="1"/>
</dbReference>
<dbReference type="PROSITE" id="PS00361">
    <property type="entry name" value="RIBOSOMAL_S10"/>
    <property type="match status" value="1"/>
</dbReference>
<evidence type="ECO:0000255" key="1">
    <source>
        <dbReference type="HAMAP-Rule" id="MF_00508"/>
    </source>
</evidence>
<evidence type="ECO:0000305" key="2"/>
<organism>
    <name type="scientific">Caldanaerobacter subterraneus subsp. tengcongensis (strain DSM 15242 / JCM 11007 / NBRC 100824 / MB4)</name>
    <name type="common">Thermoanaerobacter tengcongensis</name>
    <dbReference type="NCBI Taxonomy" id="273068"/>
    <lineage>
        <taxon>Bacteria</taxon>
        <taxon>Bacillati</taxon>
        <taxon>Bacillota</taxon>
        <taxon>Clostridia</taxon>
        <taxon>Thermoanaerobacterales</taxon>
        <taxon>Thermoanaerobacteraceae</taxon>
        <taxon>Caldanaerobacter</taxon>
    </lineage>
</organism>
<proteinExistence type="inferred from homology"/>
<gene>
    <name evidence="1" type="primary">rpsJ</name>
    <name type="ordered locus">TTE2294</name>
</gene>